<proteinExistence type="inferred from homology"/>
<feature type="chain" id="PRO_1000015069" description="Small ribosomal subunit protein uS10">
    <location>
        <begin position="1"/>
        <end position="103"/>
    </location>
</feature>
<sequence>MEKIRLKLRAYDHRVLDRSVSAIVEAVKRTGAEIRGPIPLPTKIRRYTVLRSPHINKDSREQFEIRIHSRLIDIVSATPDTVDSLMKLDLAPEVDVEVRSMGE</sequence>
<gene>
    <name evidence="1" type="primary">rpsJ</name>
    <name type="ordered locus">NIS_0222</name>
</gene>
<comment type="function">
    <text evidence="1">Involved in the binding of tRNA to the ribosomes.</text>
</comment>
<comment type="subunit">
    <text evidence="1">Part of the 30S ribosomal subunit.</text>
</comment>
<comment type="similarity">
    <text evidence="1">Belongs to the universal ribosomal protein uS10 family.</text>
</comment>
<dbReference type="EMBL" id="AP009178">
    <property type="protein sequence ID" value="BAF69336.1"/>
    <property type="molecule type" value="Genomic_DNA"/>
</dbReference>
<dbReference type="RefSeq" id="WP_012081599.1">
    <property type="nucleotide sequence ID" value="NC_009662.1"/>
</dbReference>
<dbReference type="SMR" id="A6Q1H7"/>
<dbReference type="FunCoup" id="A6Q1H7">
    <property type="interactions" value="517"/>
</dbReference>
<dbReference type="STRING" id="387092.NIS_0222"/>
<dbReference type="KEGG" id="nis:NIS_0222"/>
<dbReference type="eggNOG" id="COG0051">
    <property type="taxonomic scope" value="Bacteria"/>
</dbReference>
<dbReference type="HOGENOM" id="CLU_122625_1_2_7"/>
<dbReference type="InParanoid" id="A6Q1H7"/>
<dbReference type="OrthoDB" id="9804464at2"/>
<dbReference type="Proteomes" id="UP000001118">
    <property type="component" value="Chromosome"/>
</dbReference>
<dbReference type="GO" id="GO:1990904">
    <property type="term" value="C:ribonucleoprotein complex"/>
    <property type="evidence" value="ECO:0007669"/>
    <property type="project" value="UniProtKB-KW"/>
</dbReference>
<dbReference type="GO" id="GO:0005840">
    <property type="term" value="C:ribosome"/>
    <property type="evidence" value="ECO:0007669"/>
    <property type="project" value="UniProtKB-KW"/>
</dbReference>
<dbReference type="GO" id="GO:0003735">
    <property type="term" value="F:structural constituent of ribosome"/>
    <property type="evidence" value="ECO:0007669"/>
    <property type="project" value="InterPro"/>
</dbReference>
<dbReference type="GO" id="GO:0000049">
    <property type="term" value="F:tRNA binding"/>
    <property type="evidence" value="ECO:0007669"/>
    <property type="project" value="UniProtKB-UniRule"/>
</dbReference>
<dbReference type="GO" id="GO:0006412">
    <property type="term" value="P:translation"/>
    <property type="evidence" value="ECO:0007669"/>
    <property type="project" value="UniProtKB-UniRule"/>
</dbReference>
<dbReference type="FunFam" id="3.30.70.600:FF:000003">
    <property type="entry name" value="30S ribosomal protein S10"/>
    <property type="match status" value="1"/>
</dbReference>
<dbReference type="Gene3D" id="3.30.70.600">
    <property type="entry name" value="Ribosomal protein S10 domain"/>
    <property type="match status" value="1"/>
</dbReference>
<dbReference type="HAMAP" id="MF_00508">
    <property type="entry name" value="Ribosomal_uS10"/>
    <property type="match status" value="1"/>
</dbReference>
<dbReference type="InterPro" id="IPR001848">
    <property type="entry name" value="Ribosomal_uS10"/>
</dbReference>
<dbReference type="InterPro" id="IPR018268">
    <property type="entry name" value="Ribosomal_uS10_CS"/>
</dbReference>
<dbReference type="InterPro" id="IPR027486">
    <property type="entry name" value="Ribosomal_uS10_dom"/>
</dbReference>
<dbReference type="InterPro" id="IPR036838">
    <property type="entry name" value="Ribosomal_uS10_dom_sf"/>
</dbReference>
<dbReference type="NCBIfam" id="NF001861">
    <property type="entry name" value="PRK00596.1"/>
    <property type="match status" value="1"/>
</dbReference>
<dbReference type="NCBIfam" id="TIGR01049">
    <property type="entry name" value="rpsJ_bact"/>
    <property type="match status" value="1"/>
</dbReference>
<dbReference type="PANTHER" id="PTHR11700">
    <property type="entry name" value="30S RIBOSOMAL PROTEIN S10 FAMILY MEMBER"/>
    <property type="match status" value="1"/>
</dbReference>
<dbReference type="Pfam" id="PF00338">
    <property type="entry name" value="Ribosomal_S10"/>
    <property type="match status" value="1"/>
</dbReference>
<dbReference type="PRINTS" id="PR00971">
    <property type="entry name" value="RIBOSOMALS10"/>
</dbReference>
<dbReference type="SMART" id="SM01403">
    <property type="entry name" value="Ribosomal_S10"/>
    <property type="match status" value="1"/>
</dbReference>
<dbReference type="SUPFAM" id="SSF54999">
    <property type="entry name" value="Ribosomal protein S10"/>
    <property type="match status" value="1"/>
</dbReference>
<dbReference type="PROSITE" id="PS00361">
    <property type="entry name" value="RIBOSOMAL_S10"/>
    <property type="match status" value="1"/>
</dbReference>
<evidence type="ECO:0000255" key="1">
    <source>
        <dbReference type="HAMAP-Rule" id="MF_00508"/>
    </source>
</evidence>
<evidence type="ECO:0000305" key="2"/>
<keyword id="KW-1185">Reference proteome</keyword>
<keyword id="KW-0687">Ribonucleoprotein</keyword>
<keyword id="KW-0689">Ribosomal protein</keyword>
<accession>A6Q1H7</accession>
<name>RS10_NITSB</name>
<reference key="1">
    <citation type="journal article" date="2007" name="Proc. Natl. Acad. Sci. U.S.A.">
        <title>Deep-sea vent epsilon-proteobacterial genomes provide insights into emergence of pathogens.</title>
        <authorList>
            <person name="Nakagawa S."/>
            <person name="Takaki Y."/>
            <person name="Shimamura S."/>
            <person name="Reysenbach A.-L."/>
            <person name="Takai K."/>
            <person name="Horikoshi K."/>
        </authorList>
    </citation>
    <scope>NUCLEOTIDE SEQUENCE [LARGE SCALE GENOMIC DNA]</scope>
    <source>
        <strain>SB155-2</strain>
    </source>
</reference>
<organism>
    <name type="scientific">Nitratiruptor sp. (strain SB155-2)</name>
    <dbReference type="NCBI Taxonomy" id="387092"/>
    <lineage>
        <taxon>Bacteria</taxon>
        <taxon>Pseudomonadati</taxon>
        <taxon>Campylobacterota</taxon>
        <taxon>Epsilonproteobacteria</taxon>
        <taxon>Nautiliales</taxon>
        <taxon>Nitratiruptoraceae</taxon>
        <taxon>Nitratiruptor</taxon>
    </lineage>
</organism>
<protein>
    <recommendedName>
        <fullName evidence="1">Small ribosomal subunit protein uS10</fullName>
    </recommendedName>
    <alternativeName>
        <fullName evidence="2">30S ribosomal protein S10</fullName>
    </alternativeName>
</protein>